<protein>
    <recommendedName>
        <fullName evidence="1">Threonylcarbamoyl-AMP synthase</fullName>
        <shortName evidence="1">TC-AMP synthase</shortName>
        <ecNumber evidence="1">2.7.7.87</ecNumber>
    </recommendedName>
    <alternativeName>
        <fullName evidence="1">L-threonylcarbamoyladenylate synthase</fullName>
    </alternativeName>
    <alternativeName>
        <fullName evidence="1">t(6)A37 threonylcarbamoyladenosine biosynthesis protein TsaC</fullName>
    </alternativeName>
    <alternativeName>
        <fullName evidence="1">tRNA threonylcarbamoyladenosine biosynthesis protein TsaC</fullName>
    </alternativeName>
</protein>
<organism>
    <name type="scientific">Xanthomonas oryzae pv. oryzae (strain PXO99A)</name>
    <dbReference type="NCBI Taxonomy" id="360094"/>
    <lineage>
        <taxon>Bacteria</taxon>
        <taxon>Pseudomonadati</taxon>
        <taxon>Pseudomonadota</taxon>
        <taxon>Gammaproteobacteria</taxon>
        <taxon>Lysobacterales</taxon>
        <taxon>Lysobacteraceae</taxon>
        <taxon>Xanthomonas</taxon>
    </lineage>
</organism>
<name>TSAC_XANOP</name>
<proteinExistence type="inferred from homology"/>
<keyword id="KW-0067">ATP-binding</keyword>
<keyword id="KW-0963">Cytoplasm</keyword>
<keyword id="KW-0547">Nucleotide-binding</keyword>
<keyword id="KW-0548">Nucleotidyltransferase</keyword>
<keyword id="KW-0808">Transferase</keyword>
<keyword id="KW-0819">tRNA processing</keyword>
<dbReference type="EC" id="2.7.7.87" evidence="1"/>
<dbReference type="EMBL" id="CP000967">
    <property type="protein sequence ID" value="ACD57323.1"/>
    <property type="molecule type" value="Genomic_DNA"/>
</dbReference>
<dbReference type="RefSeq" id="WP_011257486.1">
    <property type="nucleotide sequence ID" value="NC_010717.2"/>
</dbReference>
<dbReference type="SMR" id="B2SL46"/>
<dbReference type="KEGG" id="xop:PXO_04048"/>
<dbReference type="eggNOG" id="COG0009">
    <property type="taxonomic scope" value="Bacteria"/>
</dbReference>
<dbReference type="HOGENOM" id="CLU_031397_6_0_6"/>
<dbReference type="Proteomes" id="UP000001740">
    <property type="component" value="Chromosome"/>
</dbReference>
<dbReference type="GO" id="GO:0005737">
    <property type="term" value="C:cytoplasm"/>
    <property type="evidence" value="ECO:0007669"/>
    <property type="project" value="UniProtKB-SubCell"/>
</dbReference>
<dbReference type="GO" id="GO:0005524">
    <property type="term" value="F:ATP binding"/>
    <property type="evidence" value="ECO:0007669"/>
    <property type="project" value="UniProtKB-UniRule"/>
</dbReference>
<dbReference type="GO" id="GO:0003725">
    <property type="term" value="F:double-stranded RNA binding"/>
    <property type="evidence" value="ECO:0007669"/>
    <property type="project" value="InterPro"/>
</dbReference>
<dbReference type="GO" id="GO:0061710">
    <property type="term" value="F:L-threonylcarbamoyladenylate synthase"/>
    <property type="evidence" value="ECO:0007669"/>
    <property type="project" value="UniProtKB-EC"/>
</dbReference>
<dbReference type="GO" id="GO:0000049">
    <property type="term" value="F:tRNA binding"/>
    <property type="evidence" value="ECO:0007669"/>
    <property type="project" value="TreeGrafter"/>
</dbReference>
<dbReference type="GO" id="GO:0006450">
    <property type="term" value="P:regulation of translational fidelity"/>
    <property type="evidence" value="ECO:0007669"/>
    <property type="project" value="TreeGrafter"/>
</dbReference>
<dbReference type="GO" id="GO:0002949">
    <property type="term" value="P:tRNA threonylcarbamoyladenosine modification"/>
    <property type="evidence" value="ECO:0007669"/>
    <property type="project" value="UniProtKB-UniRule"/>
</dbReference>
<dbReference type="FunFam" id="3.90.870.10:FF:000004">
    <property type="entry name" value="Threonylcarbamoyl-AMP synthase"/>
    <property type="match status" value="1"/>
</dbReference>
<dbReference type="Gene3D" id="3.90.870.10">
    <property type="entry name" value="DHBP synthase"/>
    <property type="match status" value="1"/>
</dbReference>
<dbReference type="HAMAP" id="MF_01852">
    <property type="entry name" value="TsaC"/>
    <property type="match status" value="1"/>
</dbReference>
<dbReference type="InterPro" id="IPR017945">
    <property type="entry name" value="DHBP_synth_RibB-like_a/b_dom"/>
</dbReference>
<dbReference type="InterPro" id="IPR006070">
    <property type="entry name" value="Sua5-like_dom"/>
</dbReference>
<dbReference type="InterPro" id="IPR023535">
    <property type="entry name" value="TC-AMP_synthase"/>
</dbReference>
<dbReference type="InterPro" id="IPR050156">
    <property type="entry name" value="TC-AMP_synthase_SUA5"/>
</dbReference>
<dbReference type="PANTHER" id="PTHR17490">
    <property type="entry name" value="SUA5"/>
    <property type="match status" value="1"/>
</dbReference>
<dbReference type="PANTHER" id="PTHR17490:SF18">
    <property type="entry name" value="THREONYLCARBAMOYL-AMP SYNTHASE"/>
    <property type="match status" value="1"/>
</dbReference>
<dbReference type="Pfam" id="PF01300">
    <property type="entry name" value="Sua5_yciO_yrdC"/>
    <property type="match status" value="1"/>
</dbReference>
<dbReference type="SUPFAM" id="SSF55821">
    <property type="entry name" value="YrdC/RibB"/>
    <property type="match status" value="1"/>
</dbReference>
<dbReference type="PROSITE" id="PS51163">
    <property type="entry name" value="YRDC"/>
    <property type="match status" value="1"/>
</dbReference>
<sequence>MTHILTLDNAVATLTQGGVIAYPTEAVWGLGCDPRQEAAVLRLLEIKRRPVDKGVIVVTSRVDVLRDWVDIDALAPARRQDVLASWPGPHTWILPVTARAPRWVTGEHDGLAVRISAHPVVAALCAAWGAPLVSTSANLAGEPPARSRAALEPALLATIDGVVDGEVGALAQPTRIRDARSGQILRD</sequence>
<evidence type="ECO:0000255" key="1">
    <source>
        <dbReference type="HAMAP-Rule" id="MF_01852"/>
    </source>
</evidence>
<reference key="1">
    <citation type="journal article" date="2008" name="BMC Genomics">
        <title>Genome sequence and rapid evolution of the rice pathogen Xanthomonas oryzae pv. oryzae PXO99A.</title>
        <authorList>
            <person name="Salzberg S.L."/>
            <person name="Sommer D.D."/>
            <person name="Schatz M.C."/>
            <person name="Phillippy A.M."/>
            <person name="Rabinowicz P.D."/>
            <person name="Tsuge S."/>
            <person name="Furutani A."/>
            <person name="Ochiai H."/>
            <person name="Delcher A.L."/>
            <person name="Kelley D."/>
            <person name="Madupu R."/>
            <person name="Puiu D."/>
            <person name="Radune D."/>
            <person name="Shumway M."/>
            <person name="Trapnell C."/>
            <person name="Aparna G."/>
            <person name="Jha G."/>
            <person name="Pandey A."/>
            <person name="Patil P.B."/>
            <person name="Ishihara H."/>
            <person name="Meyer D.F."/>
            <person name="Szurek B."/>
            <person name="Verdier V."/>
            <person name="Koebnik R."/>
            <person name="Dow J.M."/>
            <person name="Ryan R.P."/>
            <person name="Hirata H."/>
            <person name="Tsuyumu S."/>
            <person name="Won Lee S."/>
            <person name="Seo Y.-S."/>
            <person name="Sriariyanum M."/>
            <person name="Ronald P.C."/>
            <person name="Sonti R.V."/>
            <person name="Van Sluys M.-A."/>
            <person name="Leach J.E."/>
            <person name="White F.F."/>
            <person name="Bogdanove A.J."/>
        </authorList>
    </citation>
    <scope>NUCLEOTIDE SEQUENCE [LARGE SCALE GENOMIC DNA]</scope>
    <source>
        <strain>PXO99A</strain>
    </source>
</reference>
<gene>
    <name evidence="1" type="primary">tsaC</name>
    <name type="synonym">rimN</name>
    <name type="ordered locus">PXO_04048</name>
</gene>
<comment type="function">
    <text evidence="1">Required for the formation of a threonylcarbamoyl group on adenosine at position 37 (t(6)A37) in tRNAs that read codons beginning with adenine. Catalyzes the conversion of L-threonine, HCO(3)(-)/CO(2) and ATP to give threonylcarbamoyl-AMP (TC-AMP) as the acyladenylate intermediate, with the release of diphosphate.</text>
</comment>
<comment type="catalytic activity">
    <reaction evidence="1">
        <text>L-threonine + hydrogencarbonate + ATP = L-threonylcarbamoyladenylate + diphosphate + H2O</text>
        <dbReference type="Rhea" id="RHEA:36407"/>
        <dbReference type="ChEBI" id="CHEBI:15377"/>
        <dbReference type="ChEBI" id="CHEBI:17544"/>
        <dbReference type="ChEBI" id="CHEBI:30616"/>
        <dbReference type="ChEBI" id="CHEBI:33019"/>
        <dbReference type="ChEBI" id="CHEBI:57926"/>
        <dbReference type="ChEBI" id="CHEBI:73682"/>
        <dbReference type="EC" id="2.7.7.87"/>
    </reaction>
</comment>
<comment type="subcellular location">
    <subcellularLocation>
        <location evidence="1">Cytoplasm</location>
    </subcellularLocation>
</comment>
<comment type="similarity">
    <text evidence="1">Belongs to the SUA5 family. TsaC subfamily.</text>
</comment>
<accession>B2SL46</accession>
<feature type="chain" id="PRO_0000353016" description="Threonylcarbamoyl-AMP synthase">
    <location>
        <begin position="1"/>
        <end position="187"/>
    </location>
</feature>
<feature type="domain" description="YrdC-like" evidence="1">
    <location>
        <begin position="4"/>
        <end position="187"/>
    </location>
</feature>